<proteinExistence type="inferred from homology"/>
<accession>B0T826</accession>
<protein>
    <recommendedName>
        <fullName evidence="1">UDP-N-acetylenolpyruvoylglucosamine reductase</fullName>
        <ecNumber evidence="1">1.3.1.98</ecNumber>
    </recommendedName>
    <alternativeName>
        <fullName evidence="1">UDP-N-acetylmuramate dehydrogenase</fullName>
    </alternativeName>
</protein>
<gene>
    <name evidence="1" type="primary">murB</name>
    <name type="ordered locus">Caul_3662</name>
</gene>
<sequence>MTWKTQLPPVRGKLLVDEALAPFTWFRVGGPADVVFLPADEQDLADFLKALDPAVPVLAIGVGSNLLVRDGGVEGVVIRLGKGFNTVEALGDNRIKAGSAVPDAILARKAAEAGIAGLEFYAGIPGTVGGATIMNAGCYGSETANILISARVMDRRGQVRELTAAELHFTYRHSALQDAGLIVLDAVFEGLADDPAAIKARMAEITSRRETTQPIREKTGGSTFKNPPGHSSWKLVDEAGWRGKRFSASGKEGGGAMFSPLHSNFLINTGEATAADLEGLGDTVRADVLAKTGVQLDWEIKRIGRPA</sequence>
<feature type="chain" id="PRO_1000074518" description="UDP-N-acetylenolpyruvoylglucosamine reductase">
    <location>
        <begin position="1"/>
        <end position="307"/>
    </location>
</feature>
<feature type="domain" description="FAD-binding PCMH-type" evidence="1">
    <location>
        <begin position="27"/>
        <end position="193"/>
    </location>
</feature>
<feature type="active site" evidence="1">
    <location>
        <position position="172"/>
    </location>
</feature>
<feature type="active site" description="Proton donor" evidence="1">
    <location>
        <position position="222"/>
    </location>
</feature>
<feature type="active site" evidence="1">
    <location>
        <position position="299"/>
    </location>
</feature>
<evidence type="ECO:0000255" key="1">
    <source>
        <dbReference type="HAMAP-Rule" id="MF_00037"/>
    </source>
</evidence>
<keyword id="KW-0131">Cell cycle</keyword>
<keyword id="KW-0132">Cell division</keyword>
<keyword id="KW-0133">Cell shape</keyword>
<keyword id="KW-0961">Cell wall biogenesis/degradation</keyword>
<keyword id="KW-0963">Cytoplasm</keyword>
<keyword id="KW-0274">FAD</keyword>
<keyword id="KW-0285">Flavoprotein</keyword>
<keyword id="KW-0521">NADP</keyword>
<keyword id="KW-0560">Oxidoreductase</keyword>
<keyword id="KW-0573">Peptidoglycan synthesis</keyword>
<organism>
    <name type="scientific">Caulobacter sp. (strain K31)</name>
    <dbReference type="NCBI Taxonomy" id="366602"/>
    <lineage>
        <taxon>Bacteria</taxon>
        <taxon>Pseudomonadati</taxon>
        <taxon>Pseudomonadota</taxon>
        <taxon>Alphaproteobacteria</taxon>
        <taxon>Caulobacterales</taxon>
        <taxon>Caulobacteraceae</taxon>
        <taxon>Caulobacter</taxon>
    </lineage>
</organism>
<dbReference type="EC" id="1.3.1.98" evidence="1"/>
<dbReference type="EMBL" id="CP000927">
    <property type="protein sequence ID" value="ABZ72789.1"/>
    <property type="molecule type" value="Genomic_DNA"/>
</dbReference>
<dbReference type="SMR" id="B0T826"/>
<dbReference type="STRING" id="366602.Caul_3662"/>
<dbReference type="KEGG" id="cak:Caul_3662"/>
<dbReference type="eggNOG" id="COG0812">
    <property type="taxonomic scope" value="Bacteria"/>
</dbReference>
<dbReference type="HOGENOM" id="CLU_035304_1_0_5"/>
<dbReference type="OrthoDB" id="9804753at2"/>
<dbReference type="UniPathway" id="UPA00219"/>
<dbReference type="GO" id="GO:0005829">
    <property type="term" value="C:cytosol"/>
    <property type="evidence" value="ECO:0007669"/>
    <property type="project" value="TreeGrafter"/>
</dbReference>
<dbReference type="GO" id="GO:0071949">
    <property type="term" value="F:FAD binding"/>
    <property type="evidence" value="ECO:0007669"/>
    <property type="project" value="InterPro"/>
</dbReference>
<dbReference type="GO" id="GO:0008762">
    <property type="term" value="F:UDP-N-acetylmuramate dehydrogenase activity"/>
    <property type="evidence" value="ECO:0007669"/>
    <property type="project" value="UniProtKB-UniRule"/>
</dbReference>
<dbReference type="GO" id="GO:0051301">
    <property type="term" value="P:cell division"/>
    <property type="evidence" value="ECO:0007669"/>
    <property type="project" value="UniProtKB-KW"/>
</dbReference>
<dbReference type="GO" id="GO:0071555">
    <property type="term" value="P:cell wall organization"/>
    <property type="evidence" value="ECO:0007669"/>
    <property type="project" value="UniProtKB-KW"/>
</dbReference>
<dbReference type="GO" id="GO:0009252">
    <property type="term" value="P:peptidoglycan biosynthetic process"/>
    <property type="evidence" value="ECO:0007669"/>
    <property type="project" value="UniProtKB-UniRule"/>
</dbReference>
<dbReference type="GO" id="GO:0008360">
    <property type="term" value="P:regulation of cell shape"/>
    <property type="evidence" value="ECO:0007669"/>
    <property type="project" value="UniProtKB-KW"/>
</dbReference>
<dbReference type="Gene3D" id="3.30.465.10">
    <property type="match status" value="1"/>
</dbReference>
<dbReference type="Gene3D" id="3.90.78.10">
    <property type="entry name" value="UDP-N-acetylenolpyruvoylglucosamine reductase, C-terminal domain"/>
    <property type="match status" value="1"/>
</dbReference>
<dbReference type="Gene3D" id="3.30.43.10">
    <property type="entry name" value="Uridine Diphospho-n-acetylenolpyruvylglucosamine Reductase, domain 2"/>
    <property type="match status" value="1"/>
</dbReference>
<dbReference type="HAMAP" id="MF_00037">
    <property type="entry name" value="MurB"/>
    <property type="match status" value="1"/>
</dbReference>
<dbReference type="InterPro" id="IPR016166">
    <property type="entry name" value="FAD-bd_PCMH"/>
</dbReference>
<dbReference type="InterPro" id="IPR036318">
    <property type="entry name" value="FAD-bd_PCMH-like_sf"/>
</dbReference>
<dbReference type="InterPro" id="IPR016167">
    <property type="entry name" value="FAD-bd_PCMH_sub1"/>
</dbReference>
<dbReference type="InterPro" id="IPR016169">
    <property type="entry name" value="FAD-bd_PCMH_sub2"/>
</dbReference>
<dbReference type="InterPro" id="IPR003170">
    <property type="entry name" value="MurB"/>
</dbReference>
<dbReference type="InterPro" id="IPR011601">
    <property type="entry name" value="MurB_C"/>
</dbReference>
<dbReference type="InterPro" id="IPR036635">
    <property type="entry name" value="MurB_C_sf"/>
</dbReference>
<dbReference type="InterPro" id="IPR006094">
    <property type="entry name" value="Oxid_FAD_bind_N"/>
</dbReference>
<dbReference type="NCBIfam" id="TIGR00179">
    <property type="entry name" value="murB"/>
    <property type="match status" value="1"/>
</dbReference>
<dbReference type="NCBIfam" id="NF010480">
    <property type="entry name" value="PRK13905.1"/>
    <property type="match status" value="1"/>
</dbReference>
<dbReference type="PANTHER" id="PTHR21071">
    <property type="entry name" value="UDP-N-ACETYLENOLPYRUVOYLGLUCOSAMINE REDUCTASE"/>
    <property type="match status" value="1"/>
</dbReference>
<dbReference type="PANTHER" id="PTHR21071:SF4">
    <property type="entry name" value="UDP-N-ACETYLENOLPYRUVOYLGLUCOSAMINE REDUCTASE"/>
    <property type="match status" value="1"/>
</dbReference>
<dbReference type="Pfam" id="PF01565">
    <property type="entry name" value="FAD_binding_4"/>
    <property type="match status" value="1"/>
</dbReference>
<dbReference type="Pfam" id="PF02873">
    <property type="entry name" value="MurB_C"/>
    <property type="match status" value="1"/>
</dbReference>
<dbReference type="SUPFAM" id="SSF56176">
    <property type="entry name" value="FAD-binding/transporter-associated domain-like"/>
    <property type="match status" value="1"/>
</dbReference>
<dbReference type="SUPFAM" id="SSF56194">
    <property type="entry name" value="Uridine diphospho-N-Acetylenolpyruvylglucosamine reductase, MurB, C-terminal domain"/>
    <property type="match status" value="1"/>
</dbReference>
<dbReference type="PROSITE" id="PS51387">
    <property type="entry name" value="FAD_PCMH"/>
    <property type="match status" value="1"/>
</dbReference>
<name>MURB_CAUSK</name>
<comment type="function">
    <text evidence="1">Cell wall formation.</text>
</comment>
<comment type="catalytic activity">
    <reaction evidence="1">
        <text>UDP-N-acetyl-alpha-D-muramate + NADP(+) = UDP-N-acetyl-3-O-(1-carboxyvinyl)-alpha-D-glucosamine + NADPH + H(+)</text>
        <dbReference type="Rhea" id="RHEA:12248"/>
        <dbReference type="ChEBI" id="CHEBI:15378"/>
        <dbReference type="ChEBI" id="CHEBI:57783"/>
        <dbReference type="ChEBI" id="CHEBI:58349"/>
        <dbReference type="ChEBI" id="CHEBI:68483"/>
        <dbReference type="ChEBI" id="CHEBI:70757"/>
        <dbReference type="EC" id="1.3.1.98"/>
    </reaction>
</comment>
<comment type="cofactor">
    <cofactor evidence="1">
        <name>FAD</name>
        <dbReference type="ChEBI" id="CHEBI:57692"/>
    </cofactor>
</comment>
<comment type="pathway">
    <text evidence="1">Cell wall biogenesis; peptidoglycan biosynthesis.</text>
</comment>
<comment type="subcellular location">
    <subcellularLocation>
        <location evidence="1">Cytoplasm</location>
    </subcellularLocation>
</comment>
<comment type="similarity">
    <text evidence="1">Belongs to the MurB family.</text>
</comment>
<reference key="1">
    <citation type="submission" date="2008-01" db="EMBL/GenBank/DDBJ databases">
        <title>Complete sequence of chromosome of Caulobacter sp. K31.</title>
        <authorList>
            <consortium name="US DOE Joint Genome Institute"/>
            <person name="Copeland A."/>
            <person name="Lucas S."/>
            <person name="Lapidus A."/>
            <person name="Barry K."/>
            <person name="Glavina del Rio T."/>
            <person name="Dalin E."/>
            <person name="Tice H."/>
            <person name="Pitluck S."/>
            <person name="Bruce D."/>
            <person name="Goodwin L."/>
            <person name="Thompson L.S."/>
            <person name="Brettin T."/>
            <person name="Detter J.C."/>
            <person name="Han C."/>
            <person name="Schmutz J."/>
            <person name="Larimer F."/>
            <person name="Land M."/>
            <person name="Hauser L."/>
            <person name="Kyrpides N."/>
            <person name="Kim E."/>
            <person name="Stephens C."/>
            <person name="Richardson P."/>
        </authorList>
    </citation>
    <scope>NUCLEOTIDE SEQUENCE [LARGE SCALE GENOMIC DNA]</scope>
    <source>
        <strain>K31</strain>
    </source>
</reference>